<reference key="1">
    <citation type="submission" date="2008-02" db="EMBL/GenBank/DDBJ databases">
        <title>Zygosaccharomyces rouxii homologs of Saccharomyces cerevisiae chromosome III.</title>
        <authorList>
            <person name="Gordon J.L."/>
            <person name="Wolfe K.H."/>
        </authorList>
    </citation>
    <scope>NUCLEOTIDE SEQUENCE [LARGE SCALE GENOMIC DNA]</scope>
    <source>
        <strain>ATCC 2623 / CBS 732 / BCRC 21506 / NBRC 1130 / NCYC 568 / NRRL Y-229</strain>
    </source>
</reference>
<reference key="2">
    <citation type="journal article" date="2009" name="Genome Res.">
        <title>Comparative genomics of protoploid Saccharomycetaceae.</title>
        <authorList>
            <consortium name="The Genolevures Consortium"/>
            <person name="Souciet J.-L."/>
            <person name="Dujon B."/>
            <person name="Gaillardin C."/>
            <person name="Johnston M."/>
            <person name="Baret P.V."/>
            <person name="Cliften P."/>
            <person name="Sherman D.J."/>
            <person name="Weissenbach J."/>
            <person name="Westhof E."/>
            <person name="Wincker P."/>
            <person name="Jubin C."/>
            <person name="Poulain J."/>
            <person name="Barbe V."/>
            <person name="Segurens B."/>
            <person name="Artiguenave F."/>
            <person name="Anthouard V."/>
            <person name="Vacherie B."/>
            <person name="Val M.-E."/>
            <person name="Fulton R.S."/>
            <person name="Minx P."/>
            <person name="Wilson R."/>
            <person name="Durrens P."/>
            <person name="Jean G."/>
            <person name="Marck C."/>
            <person name="Martin T."/>
            <person name="Nikolski M."/>
            <person name="Rolland T."/>
            <person name="Seret M.-L."/>
            <person name="Casaregola S."/>
            <person name="Despons L."/>
            <person name="Fairhead C."/>
            <person name="Fischer G."/>
            <person name="Lafontaine I."/>
            <person name="Leh V."/>
            <person name="Lemaire M."/>
            <person name="de Montigny J."/>
            <person name="Neuveglise C."/>
            <person name="Thierry A."/>
            <person name="Blanc-Lenfle I."/>
            <person name="Bleykasten C."/>
            <person name="Diffels J."/>
            <person name="Fritsch E."/>
            <person name="Frangeul L."/>
            <person name="Goeffon A."/>
            <person name="Jauniaux N."/>
            <person name="Kachouri-Lafond R."/>
            <person name="Payen C."/>
            <person name="Potier S."/>
            <person name="Pribylova L."/>
            <person name="Ozanne C."/>
            <person name="Richard G.-F."/>
            <person name="Sacerdot C."/>
            <person name="Straub M.-L."/>
            <person name="Talla E."/>
        </authorList>
    </citation>
    <scope>NUCLEOTIDE SEQUENCE [LARGE SCALE GENOMIC DNA]</scope>
    <source>
        <strain>ATCC 2623 / CBS 732 / BCRC 21506 / NBRC 1130 / NCYC 568 / NRRL Y-229</strain>
    </source>
</reference>
<evidence type="ECO:0000250" key="1"/>
<evidence type="ECO:0000256" key="2">
    <source>
        <dbReference type="SAM" id="MobiDB-lite"/>
    </source>
</evidence>
<evidence type="ECO:0000305" key="3"/>
<gene>
    <name type="primary">RTC4</name>
    <name type="ordered locus">ZYRO0F16126g</name>
</gene>
<name>RTC4_ZYGRC</name>
<dbReference type="EMBL" id="AM989983">
    <property type="protein sequence ID" value="CAQ43402.1"/>
    <property type="molecule type" value="Genomic_DNA"/>
</dbReference>
<dbReference type="EMBL" id="CU928178">
    <property type="protein sequence ID" value="CAR28969.1"/>
    <property type="molecule type" value="Genomic_DNA"/>
</dbReference>
<dbReference type="RefSeq" id="XP_002497902.1">
    <property type="nucleotide sequence ID" value="XM_002497857.1"/>
</dbReference>
<dbReference type="STRING" id="559307.C5DYV8"/>
<dbReference type="GeneID" id="8205674"/>
<dbReference type="KEGG" id="zro:ZYRO0F16126g"/>
<dbReference type="eggNOG" id="ENOG502S1RG">
    <property type="taxonomic scope" value="Eukaryota"/>
</dbReference>
<dbReference type="HOGENOM" id="CLU_049922_1_0_1"/>
<dbReference type="InParanoid" id="C5DYV8"/>
<dbReference type="Proteomes" id="UP000008536">
    <property type="component" value="Chromosome F"/>
</dbReference>
<dbReference type="GO" id="GO:0005737">
    <property type="term" value="C:cytoplasm"/>
    <property type="evidence" value="ECO:0007669"/>
    <property type="project" value="UniProtKB-SubCell"/>
</dbReference>
<dbReference type="GO" id="GO:0005634">
    <property type="term" value="C:nucleus"/>
    <property type="evidence" value="ECO:0007669"/>
    <property type="project" value="UniProtKB-SubCell"/>
</dbReference>
<dbReference type="InterPro" id="IPR039024">
    <property type="entry name" value="RTC4"/>
</dbReference>
<dbReference type="InterPro" id="IPR028094">
    <property type="entry name" value="RTC4_C"/>
</dbReference>
<dbReference type="PANTHER" id="PTHR41391">
    <property type="entry name" value="RESTRICTION OF TELOMERE CAPPING PROTEIN 4"/>
    <property type="match status" value="1"/>
</dbReference>
<dbReference type="PANTHER" id="PTHR41391:SF1">
    <property type="entry name" value="RESTRICTION OF TELOMERE CAPPING PROTEIN 4"/>
    <property type="match status" value="1"/>
</dbReference>
<dbReference type="Pfam" id="PF14474">
    <property type="entry name" value="RTC4"/>
    <property type="match status" value="1"/>
</dbReference>
<dbReference type="SMART" id="SM01312">
    <property type="entry name" value="RTC4"/>
    <property type="match status" value="1"/>
</dbReference>
<feature type="chain" id="PRO_0000408803" description="Restriction of telomere capping protein 4">
    <location>
        <begin position="1"/>
        <end position="282"/>
    </location>
</feature>
<feature type="region of interest" description="Disordered" evidence="2">
    <location>
        <begin position="22"/>
        <end position="70"/>
    </location>
</feature>
<feature type="compositionally biased region" description="Basic and acidic residues" evidence="2">
    <location>
        <begin position="22"/>
        <end position="43"/>
    </location>
</feature>
<feature type="compositionally biased region" description="Basic and acidic residues" evidence="2">
    <location>
        <begin position="60"/>
        <end position="70"/>
    </location>
</feature>
<sequence>MGIEVGKRRLVYTTSRNNDRNLDFLKRRRIEDSSSSSDHEDNQRGSLSSSSSSEEDSDRDDSHVSLRQSVDDRDLEITKKREEILDTSEIKPIERQKKSYDDEQGDVDQICKWFMDRYKFPKILYASELLEKATPLLPIVRDMYRGLVDSHYKFEANEMRQSSQRAILSVQEFRNMDLTKFTAGYYGMKRQFQIGEVILQKYKSFLLRRQGDTMKWWGVSDFAHYVLAPEVLVSLCIKEMQLSDDVYDKNARERAYDIFVNTVKFGTLVADQSPLEPWEVTP</sequence>
<comment type="function">
    <text evidence="1">May be involved in a process influencing telomere capping.</text>
</comment>
<comment type="subcellular location">
    <subcellularLocation>
        <location evidence="1">Cytoplasm</location>
    </subcellularLocation>
    <subcellularLocation>
        <location evidence="1">Nucleus</location>
    </subcellularLocation>
</comment>
<comment type="similarity">
    <text evidence="3">Belongs to the RTC4 family.</text>
</comment>
<keyword id="KW-0963">Cytoplasm</keyword>
<keyword id="KW-0539">Nucleus</keyword>
<keyword id="KW-1185">Reference proteome</keyword>
<proteinExistence type="inferred from homology"/>
<organism>
    <name type="scientific">Zygosaccharomyces rouxii (strain ATCC 2623 / CBS 732 / NBRC 1130 / NCYC 568 / NRRL Y-229)</name>
    <dbReference type="NCBI Taxonomy" id="559307"/>
    <lineage>
        <taxon>Eukaryota</taxon>
        <taxon>Fungi</taxon>
        <taxon>Dikarya</taxon>
        <taxon>Ascomycota</taxon>
        <taxon>Saccharomycotina</taxon>
        <taxon>Saccharomycetes</taxon>
        <taxon>Saccharomycetales</taxon>
        <taxon>Saccharomycetaceae</taxon>
        <taxon>Zygosaccharomyces</taxon>
    </lineage>
</organism>
<protein>
    <recommendedName>
        <fullName>Restriction of telomere capping protein 4</fullName>
    </recommendedName>
</protein>
<accession>C5DYV8</accession>
<accession>B2G493</accession>